<sequence>MKLIALCCLLLLGLLGFLAAPGVASPSRHTGPGNGSGSGAGSGNPFRSPSSQQRPLYYDAPIGKPSKTMYA</sequence>
<organism evidence="6">
    <name type="scientific">Drosophila melanogaster</name>
    <name type="common">Fruit fly</name>
    <dbReference type="NCBI Taxonomy" id="7227"/>
    <lineage>
        <taxon>Eukaryota</taxon>
        <taxon>Metazoa</taxon>
        <taxon>Ecdysozoa</taxon>
        <taxon>Arthropoda</taxon>
        <taxon>Hexapoda</taxon>
        <taxon>Insecta</taxon>
        <taxon>Pterygota</taxon>
        <taxon>Neoptera</taxon>
        <taxon>Endopterygota</taxon>
        <taxon>Diptera</taxon>
        <taxon>Brachycera</taxon>
        <taxon>Muscomorpha</taxon>
        <taxon>Ephydroidea</taxon>
        <taxon>Drosophilidae</taxon>
        <taxon>Drosophila</taxon>
        <taxon>Sophophora</taxon>
    </lineage>
</organism>
<evidence type="ECO:0000255" key="1"/>
<evidence type="ECO:0000256" key="2">
    <source>
        <dbReference type="SAM" id="MobiDB-lite"/>
    </source>
</evidence>
<evidence type="ECO:0000269" key="3">
    <source>
    </source>
</evidence>
<evidence type="ECO:0000269" key="4">
    <source>
    </source>
</evidence>
<evidence type="ECO:0000303" key="5">
    <source>
    </source>
</evidence>
<evidence type="ECO:0000305" key="6"/>
<protein>
    <recommendedName>
        <fullName>Immune-induced peptide 18</fullName>
        <shortName>DIM-18</shortName>
    </recommendedName>
</protein>
<proteinExistence type="evidence at protein level"/>
<gene>
    <name type="primary">IM18</name>
    <name type="ORF">CG33706</name>
</gene>
<feature type="signal peptide" evidence="1">
    <location>
        <begin position="1"/>
        <end position="24"/>
    </location>
</feature>
<feature type="propeptide" id="PRO_0000021506" evidence="1">
    <location>
        <begin position="25"/>
        <end position="26"/>
    </location>
</feature>
<feature type="peptide" id="PRO_0000021507" description="Immune-induced peptide 18">
    <location>
        <begin position="27"/>
        <end position="71"/>
    </location>
</feature>
<feature type="region of interest" description="Disordered" evidence="2">
    <location>
        <begin position="26"/>
        <end position="71"/>
    </location>
</feature>
<feature type="compositionally biased region" description="Gly residues" evidence="2">
    <location>
        <begin position="32"/>
        <end position="42"/>
    </location>
</feature>
<comment type="subcellular location">
    <subcellularLocation>
        <location evidence="4">Secreted</location>
    </subcellularLocation>
</comment>
<comment type="tissue specificity">
    <text evidence="4">Hemolymph (at protein level).</text>
</comment>
<comment type="induction">
    <text evidence="4">By bacterial infection. Detected within 24 hours of infection.</text>
</comment>
<comment type="mass spectrometry"/>
<comment type="miscellaneous">
    <text evidence="4">Not induced after bacterial challenge in strains carrying a loss-of-function mutation for Toll. Constitutively expressed in Toll gain-of-function mutants.</text>
</comment>
<reference evidence="6" key="1">
    <citation type="journal article" date="2000" name="Science">
        <title>The genome sequence of Drosophila melanogaster.</title>
        <authorList>
            <person name="Adams M.D."/>
            <person name="Celniker S.E."/>
            <person name="Holt R.A."/>
            <person name="Evans C.A."/>
            <person name="Gocayne J.D."/>
            <person name="Amanatides P.G."/>
            <person name="Scherer S.E."/>
            <person name="Li P.W."/>
            <person name="Hoskins R.A."/>
            <person name="Galle R.F."/>
            <person name="George R.A."/>
            <person name="Lewis S.E."/>
            <person name="Richards S."/>
            <person name="Ashburner M."/>
            <person name="Henderson S.N."/>
            <person name="Sutton G.G."/>
            <person name="Wortman J.R."/>
            <person name="Yandell M.D."/>
            <person name="Zhang Q."/>
            <person name="Chen L.X."/>
            <person name="Brandon R.C."/>
            <person name="Rogers Y.-H.C."/>
            <person name="Blazej R.G."/>
            <person name="Champe M."/>
            <person name="Pfeiffer B.D."/>
            <person name="Wan K.H."/>
            <person name="Doyle C."/>
            <person name="Baxter E.G."/>
            <person name="Helt G."/>
            <person name="Nelson C.R."/>
            <person name="Miklos G.L.G."/>
            <person name="Abril J.F."/>
            <person name="Agbayani A."/>
            <person name="An H.-J."/>
            <person name="Andrews-Pfannkoch C."/>
            <person name="Baldwin D."/>
            <person name="Ballew R.M."/>
            <person name="Basu A."/>
            <person name="Baxendale J."/>
            <person name="Bayraktaroglu L."/>
            <person name="Beasley E.M."/>
            <person name="Beeson K.Y."/>
            <person name="Benos P.V."/>
            <person name="Berman B.P."/>
            <person name="Bhandari D."/>
            <person name="Bolshakov S."/>
            <person name="Borkova D."/>
            <person name="Botchan M.R."/>
            <person name="Bouck J."/>
            <person name="Brokstein P."/>
            <person name="Brottier P."/>
            <person name="Burtis K.C."/>
            <person name="Busam D.A."/>
            <person name="Butler H."/>
            <person name="Cadieu E."/>
            <person name="Center A."/>
            <person name="Chandra I."/>
            <person name="Cherry J.M."/>
            <person name="Cawley S."/>
            <person name="Dahlke C."/>
            <person name="Davenport L.B."/>
            <person name="Davies P."/>
            <person name="de Pablos B."/>
            <person name="Delcher A."/>
            <person name="Deng Z."/>
            <person name="Mays A.D."/>
            <person name="Dew I."/>
            <person name="Dietz S.M."/>
            <person name="Dodson K."/>
            <person name="Doup L.E."/>
            <person name="Downes M."/>
            <person name="Dugan-Rocha S."/>
            <person name="Dunkov B.C."/>
            <person name="Dunn P."/>
            <person name="Durbin K.J."/>
            <person name="Evangelista C.C."/>
            <person name="Ferraz C."/>
            <person name="Ferriera S."/>
            <person name="Fleischmann W."/>
            <person name="Fosler C."/>
            <person name="Gabrielian A.E."/>
            <person name="Garg N.S."/>
            <person name="Gelbart W.M."/>
            <person name="Glasser K."/>
            <person name="Glodek A."/>
            <person name="Gong F."/>
            <person name="Gorrell J.H."/>
            <person name="Gu Z."/>
            <person name="Guan P."/>
            <person name="Harris M."/>
            <person name="Harris N.L."/>
            <person name="Harvey D.A."/>
            <person name="Heiman T.J."/>
            <person name="Hernandez J.R."/>
            <person name="Houck J."/>
            <person name="Hostin D."/>
            <person name="Houston K.A."/>
            <person name="Howland T.J."/>
            <person name="Wei M.-H."/>
            <person name="Ibegwam C."/>
            <person name="Jalali M."/>
            <person name="Kalush F."/>
            <person name="Karpen G.H."/>
            <person name="Ke Z."/>
            <person name="Kennison J.A."/>
            <person name="Ketchum K.A."/>
            <person name="Kimmel B.E."/>
            <person name="Kodira C.D."/>
            <person name="Kraft C.L."/>
            <person name="Kravitz S."/>
            <person name="Kulp D."/>
            <person name="Lai Z."/>
            <person name="Lasko P."/>
            <person name="Lei Y."/>
            <person name="Levitsky A.A."/>
            <person name="Li J.H."/>
            <person name="Li Z."/>
            <person name="Liang Y."/>
            <person name="Lin X."/>
            <person name="Liu X."/>
            <person name="Mattei B."/>
            <person name="McIntosh T.C."/>
            <person name="McLeod M.P."/>
            <person name="McPherson D."/>
            <person name="Merkulov G."/>
            <person name="Milshina N.V."/>
            <person name="Mobarry C."/>
            <person name="Morris J."/>
            <person name="Moshrefi A."/>
            <person name="Mount S.M."/>
            <person name="Moy M."/>
            <person name="Murphy B."/>
            <person name="Murphy L."/>
            <person name="Muzny D.M."/>
            <person name="Nelson D.L."/>
            <person name="Nelson D.R."/>
            <person name="Nelson K.A."/>
            <person name="Nixon K."/>
            <person name="Nusskern D.R."/>
            <person name="Pacleb J.M."/>
            <person name="Palazzolo M."/>
            <person name="Pittman G.S."/>
            <person name="Pan S."/>
            <person name="Pollard J."/>
            <person name="Puri V."/>
            <person name="Reese M.G."/>
            <person name="Reinert K."/>
            <person name="Remington K."/>
            <person name="Saunders R.D.C."/>
            <person name="Scheeler F."/>
            <person name="Shen H."/>
            <person name="Shue B.C."/>
            <person name="Siden-Kiamos I."/>
            <person name="Simpson M."/>
            <person name="Skupski M.P."/>
            <person name="Smith T.J."/>
            <person name="Spier E."/>
            <person name="Spradling A.C."/>
            <person name="Stapleton M."/>
            <person name="Strong R."/>
            <person name="Sun E."/>
            <person name="Svirskas R."/>
            <person name="Tector C."/>
            <person name="Turner R."/>
            <person name="Venter E."/>
            <person name="Wang A.H."/>
            <person name="Wang X."/>
            <person name="Wang Z.-Y."/>
            <person name="Wassarman D.A."/>
            <person name="Weinstock G.M."/>
            <person name="Weissenbach J."/>
            <person name="Williams S.M."/>
            <person name="Woodage T."/>
            <person name="Worley K.C."/>
            <person name="Wu D."/>
            <person name="Yang S."/>
            <person name="Yao Q.A."/>
            <person name="Ye J."/>
            <person name="Yeh R.-F."/>
            <person name="Zaveri J.S."/>
            <person name="Zhan M."/>
            <person name="Zhang G."/>
            <person name="Zhao Q."/>
            <person name="Zheng L."/>
            <person name="Zheng X.H."/>
            <person name="Zhong F.N."/>
            <person name="Zhong W."/>
            <person name="Zhou X."/>
            <person name="Zhu S.C."/>
            <person name="Zhu X."/>
            <person name="Smith H.O."/>
            <person name="Gibbs R.A."/>
            <person name="Myers E.W."/>
            <person name="Rubin G.M."/>
            <person name="Venter J.C."/>
        </authorList>
    </citation>
    <scope>NUCLEOTIDE SEQUENCE [LARGE SCALE GENOMIC DNA]</scope>
    <source>
        <strain evidence="3">Berkeley</strain>
    </source>
</reference>
<reference key="2">
    <citation type="journal article" date="2002" name="Genome Biol.">
        <title>Annotation of the Drosophila melanogaster euchromatic genome: a systematic review.</title>
        <authorList>
            <person name="Misra S."/>
            <person name="Crosby M.A."/>
            <person name="Mungall C.J."/>
            <person name="Matthews B.B."/>
            <person name="Campbell K.S."/>
            <person name="Hradecky P."/>
            <person name="Huang Y."/>
            <person name="Kaminker J.S."/>
            <person name="Millburn G.H."/>
            <person name="Prochnik S.E."/>
            <person name="Smith C.D."/>
            <person name="Tupy J.L."/>
            <person name="Whitfield E.J."/>
            <person name="Bayraktaroglu L."/>
            <person name="Berman B.P."/>
            <person name="Bettencourt B.R."/>
            <person name="Celniker S.E."/>
            <person name="de Grey A.D.N.J."/>
            <person name="Drysdale R.A."/>
            <person name="Harris N.L."/>
            <person name="Richter J."/>
            <person name="Russo S."/>
            <person name="Schroeder A.J."/>
            <person name="Shu S.Q."/>
            <person name="Stapleton M."/>
            <person name="Yamada C."/>
            <person name="Ashburner M."/>
            <person name="Gelbart W.M."/>
            <person name="Rubin G.M."/>
            <person name="Lewis S.E."/>
        </authorList>
    </citation>
    <scope>GENOME REANNOTATION</scope>
    <source>
        <strain>Berkeley</strain>
    </source>
</reference>
<reference evidence="6" key="3">
    <citation type="submission" date="2009-05" db="EMBL/GenBank/DDBJ databases">
        <authorList>
            <person name="Carlson J.W."/>
            <person name="Booth B."/>
            <person name="Frise E."/>
            <person name="Park S."/>
            <person name="Wan K.H."/>
            <person name="Yu C."/>
            <person name="Celniker S.E."/>
        </authorList>
    </citation>
    <scope>NUCLEOTIDE SEQUENCE [LARGE SCALE MRNA]</scope>
    <source>
        <strain>Berkeley</strain>
        <tissue>Testis</tissue>
    </source>
</reference>
<reference evidence="6" key="4">
    <citation type="submission" date="2002-07" db="UniProtKB">
        <authorList>
            <person name="Bulet P."/>
            <person name="Charlet M."/>
            <person name="Ehret-Sabatier L."/>
        </authorList>
    </citation>
    <scope>PROTEIN SEQUENCE OF 27-71</scope>
    <scope>IDENTIFICATION BY MASS SPECTROMETRY</scope>
    <source>
        <strain evidence="6">Oregon-R</strain>
        <tissue evidence="6">Hemolymph</tissue>
    </source>
</reference>
<reference evidence="6" key="5">
    <citation type="journal article" date="1998" name="Proc. Natl. Acad. Sci. U.S.A.">
        <title>Differential display of peptides induced during the immune response of Drosophila: a matrix-assisted laser desorption ionization time-of-flight mass spectrometry study.</title>
        <authorList>
            <person name="Uttenweiler-Joseph S."/>
            <person name="Moniatte M."/>
            <person name="Lagueux M."/>
            <person name="van Dorsselaer A."/>
            <person name="Hoffmann J.A."/>
            <person name="Bulet P."/>
        </authorList>
    </citation>
    <scope>MASS SPECTROMETRY</scope>
    <scope>SUBCELLULAR LOCATION</scope>
    <scope>TISSUE SPECIFICITY</scope>
    <scope>INDUCTION BY BACTERIA</scope>
    <source>
        <strain evidence="5">Oregon-R</strain>
        <tissue evidence="5">Hemolymph</tissue>
    </source>
</reference>
<accession>P82701</accession>
<accession>C4IXR8</accession>
<accession>Q59E66</accession>
<dbReference type="EMBL" id="AE013599">
    <property type="protein sequence ID" value="AAX52679.1"/>
    <property type="molecule type" value="Genomic_DNA"/>
</dbReference>
<dbReference type="EMBL" id="AY089376">
    <property type="protein sequence ID" value="ACR44236.1"/>
    <property type="molecule type" value="mRNA"/>
</dbReference>
<dbReference type="RefSeq" id="NP_001027447.1">
    <property type="nucleotide sequence ID" value="NM_001032276.1"/>
</dbReference>
<dbReference type="RefSeq" id="NP_001286772.1">
    <property type="nucleotide sequence ID" value="NM_001299843.1"/>
</dbReference>
<dbReference type="BioGRID" id="533735">
    <property type="interactions" value="10"/>
</dbReference>
<dbReference type="FunCoup" id="P82701">
    <property type="interactions" value="7"/>
</dbReference>
<dbReference type="IntAct" id="P82701">
    <property type="interactions" value="10"/>
</dbReference>
<dbReference type="STRING" id="7227.FBpp0100134"/>
<dbReference type="PaxDb" id="7227-FBpp0100134"/>
<dbReference type="DNASU" id="3772138"/>
<dbReference type="EnsemblMetazoa" id="FBtr0091694">
    <property type="protein sequence ID" value="FBpp0100134"/>
    <property type="gene ID" value="FBgn0067903"/>
</dbReference>
<dbReference type="EnsemblMetazoa" id="FBtr0343266">
    <property type="protein sequence ID" value="FBpp0309931"/>
    <property type="gene ID" value="FBgn0067903"/>
</dbReference>
<dbReference type="GeneID" id="3772138"/>
<dbReference type="KEGG" id="dme:Dmel_CG33706"/>
<dbReference type="AGR" id="FB:FBgn0067903"/>
<dbReference type="CTD" id="3772138"/>
<dbReference type="FlyBase" id="FBgn0067903">
    <property type="gene designation" value="IM18"/>
</dbReference>
<dbReference type="VEuPathDB" id="VectorBase:FBgn0067903"/>
<dbReference type="HOGENOM" id="CLU_2833935_0_0_1"/>
<dbReference type="InParanoid" id="P82701"/>
<dbReference type="OMA" id="QQRPFYY"/>
<dbReference type="PhylomeDB" id="P82701"/>
<dbReference type="BioGRID-ORCS" id="3772138">
    <property type="hits" value="0 hits in 1 CRISPR screen"/>
</dbReference>
<dbReference type="GenomeRNAi" id="3772138"/>
<dbReference type="PRO" id="PR:P82701"/>
<dbReference type="Proteomes" id="UP000000803">
    <property type="component" value="Chromosome 2R"/>
</dbReference>
<dbReference type="Bgee" id="FBgn0067903">
    <property type="expression patterns" value="Expressed in seminal fluid secreting gland and 12 other cell types or tissues"/>
</dbReference>
<dbReference type="GO" id="GO:0005576">
    <property type="term" value="C:extracellular region"/>
    <property type="evidence" value="ECO:0000314"/>
    <property type="project" value="FlyBase"/>
</dbReference>
<dbReference type="GO" id="GO:0006952">
    <property type="term" value="P:defense response"/>
    <property type="evidence" value="ECO:0000314"/>
    <property type="project" value="FlyBase"/>
</dbReference>
<dbReference type="GO" id="GO:0098542">
    <property type="term" value="P:defense response to other organism"/>
    <property type="evidence" value="ECO:0000315"/>
    <property type="project" value="FlyBase"/>
</dbReference>
<dbReference type="GO" id="GO:0045087">
    <property type="term" value="P:innate immune response"/>
    <property type="evidence" value="ECO:0007669"/>
    <property type="project" value="UniProtKB-KW"/>
</dbReference>
<dbReference type="GO" id="GO:0009617">
    <property type="term" value="P:response to bacterium"/>
    <property type="evidence" value="ECO:0007007"/>
    <property type="project" value="FlyBase"/>
</dbReference>
<name>IM18_DROME</name>
<keyword id="KW-0903">Direct protein sequencing</keyword>
<keyword id="KW-0391">Immunity</keyword>
<keyword id="KW-0399">Innate immunity</keyword>
<keyword id="KW-1185">Reference proteome</keyword>
<keyword id="KW-0964">Secreted</keyword>
<keyword id="KW-0732">Signal</keyword>